<sequence length="196" mass="21922">MKYAQYVFLASIFSAVEYSLAQTCAVDSFSVKDNFDPKRYAGKWYALAKKDPEGLFLQDNISAEYTVEEDGTMTASSKGRVKLFGFWVICADMAAQYTVPDPTTPAKMYMTYQGLASYLSSGGDNYWVIDTDYDNYAITYACRSLKEDGSCDDGYSLIFSRNPRGLPPAIQRIVRQKQEEICMSGQFQPVLQSGAC</sequence>
<name>PURP_CHICK</name>
<accession>P08938</accession>
<comment type="function">
    <text>May be involved in the transport of retinol between the photoreceptors and the pigmented epithelium.</text>
</comment>
<comment type="subcellular location">
    <subcellularLocation>
        <location>Secreted</location>
        <location>Extracellular space</location>
        <location>Extracellular matrix</location>
        <location>Interphotoreceptor matrix</location>
    </subcellularLocation>
</comment>
<comment type="similarity">
    <text evidence="2">Belongs to the calycin superfamily. Lipocalin family.</text>
</comment>
<evidence type="ECO:0000250" key="1"/>
<evidence type="ECO:0000305" key="2"/>
<protein>
    <recommendedName>
        <fullName>Purpurin</fullName>
    </recommendedName>
</protein>
<feature type="signal peptide">
    <location>
        <begin position="1"/>
        <end position="21"/>
    </location>
</feature>
<feature type="chain" id="PRO_0000017957" description="Purpurin">
    <location>
        <begin position="22"/>
        <end position="196"/>
    </location>
</feature>
<feature type="disulfide bond" evidence="1">
    <location>
        <begin position="24"/>
        <end position="182"/>
    </location>
</feature>
<feature type="disulfide bond" evidence="1">
    <location>
        <begin position="90"/>
        <end position="196"/>
    </location>
</feature>
<feature type="disulfide bond" evidence="1">
    <location>
        <begin position="142"/>
        <end position="151"/>
    </location>
</feature>
<reference key="1">
    <citation type="journal article" date="1987" name="Cell">
        <title>Sequence analysis, cellular localization, and expression of a neuroretina adhesion and cell survival molecule.</title>
        <authorList>
            <person name="Berman P."/>
            <person name="Gray P."/>
            <person name="Chen E."/>
            <person name="Keyser K."/>
            <person name="Ehrlich D."/>
            <person name="Karten H."/>
            <person name="Lacorbiere M."/>
            <person name="Esch F."/>
            <person name="Schubert D."/>
        </authorList>
    </citation>
    <scope>NUCLEOTIDE SEQUENCE [MRNA]</scope>
</reference>
<reference key="2">
    <citation type="journal article" date="1986" name="J. Cell Biol.">
        <title>A chick neural retina adhesion and survival molecule is a retinol-binding protein.</title>
        <authorList>
            <person name="Schubert D."/>
            <person name="Lacorbiere M."/>
            <person name="Esch F."/>
        </authorList>
    </citation>
    <scope>PROTEIN SEQUENCE OF 66-84; 98-109; 122-127 AND 141-155</scope>
</reference>
<keyword id="KW-0903">Direct protein sequencing</keyword>
<keyword id="KW-1015">Disulfide bond</keyword>
<keyword id="KW-0272">Extracellular matrix</keyword>
<keyword id="KW-1185">Reference proteome</keyword>
<keyword id="KW-0683">Retinol-binding</keyword>
<keyword id="KW-0964">Secreted</keyword>
<keyword id="KW-0732">Signal</keyword>
<keyword id="KW-0813">Transport</keyword>
<keyword id="KW-0845">Vitamin A</keyword>
<organism>
    <name type="scientific">Gallus gallus</name>
    <name type="common">Chicken</name>
    <dbReference type="NCBI Taxonomy" id="9031"/>
    <lineage>
        <taxon>Eukaryota</taxon>
        <taxon>Metazoa</taxon>
        <taxon>Chordata</taxon>
        <taxon>Craniata</taxon>
        <taxon>Vertebrata</taxon>
        <taxon>Euteleostomi</taxon>
        <taxon>Archelosauria</taxon>
        <taxon>Archosauria</taxon>
        <taxon>Dinosauria</taxon>
        <taxon>Saurischia</taxon>
        <taxon>Theropoda</taxon>
        <taxon>Coelurosauria</taxon>
        <taxon>Aves</taxon>
        <taxon>Neognathae</taxon>
        <taxon>Galloanserae</taxon>
        <taxon>Galliformes</taxon>
        <taxon>Phasianidae</taxon>
        <taxon>Phasianinae</taxon>
        <taxon>Gallus</taxon>
    </lineage>
</organism>
<proteinExistence type="evidence at protein level"/>
<dbReference type="EMBL" id="M17538">
    <property type="protein sequence ID" value="AAA49033.1"/>
    <property type="molecule type" value="mRNA"/>
</dbReference>
<dbReference type="PIR" id="A26677">
    <property type="entry name" value="A26677"/>
</dbReference>
<dbReference type="PIR" id="A26969">
    <property type="entry name" value="A26969"/>
</dbReference>
<dbReference type="RefSeq" id="NP_990798.1">
    <property type="nucleotide sequence ID" value="NM_205467.4"/>
</dbReference>
<dbReference type="SMR" id="P08938"/>
<dbReference type="STRING" id="9031.ENSGALP00000024759"/>
<dbReference type="PaxDb" id="9031-ENSGALP00000024759"/>
<dbReference type="Ensembl" id="ENSGALT00010032521.1">
    <property type="protein sequence ID" value="ENSGALP00010019261.1"/>
    <property type="gene ID" value="ENSGALG00010013515.1"/>
</dbReference>
<dbReference type="GeneID" id="396454"/>
<dbReference type="KEGG" id="gga:396454"/>
<dbReference type="CTD" id="335651"/>
<dbReference type="VEuPathDB" id="HostDB:geneid_396454"/>
<dbReference type="eggNOG" id="ENOG502QQ8B">
    <property type="taxonomic scope" value="Eukaryota"/>
</dbReference>
<dbReference type="GeneTree" id="ENSGT00510000047107"/>
<dbReference type="HOGENOM" id="CLU_094618_0_0_1"/>
<dbReference type="InParanoid" id="P08938"/>
<dbReference type="OMA" id="MVCADMA"/>
<dbReference type="OrthoDB" id="9923952at2759"/>
<dbReference type="PhylomeDB" id="P08938"/>
<dbReference type="TreeFam" id="TF331445"/>
<dbReference type="PRO" id="PR:P08938"/>
<dbReference type="Proteomes" id="UP000000539">
    <property type="component" value="Chromosome Z"/>
</dbReference>
<dbReference type="Bgee" id="ENSGALG00000015374">
    <property type="expression patterns" value="Expressed in liver and 11 other cell types or tissues"/>
</dbReference>
<dbReference type="GO" id="GO:0005615">
    <property type="term" value="C:extracellular space"/>
    <property type="evidence" value="ECO:0007669"/>
    <property type="project" value="UniProtKB-ARBA"/>
</dbReference>
<dbReference type="GO" id="GO:0033165">
    <property type="term" value="C:interphotoreceptor matrix"/>
    <property type="evidence" value="ECO:0007669"/>
    <property type="project" value="UniProtKB-SubCell"/>
</dbReference>
<dbReference type="GO" id="GO:0016918">
    <property type="term" value="F:retinal binding"/>
    <property type="evidence" value="ECO:0007669"/>
    <property type="project" value="UniProtKB-KW"/>
</dbReference>
<dbReference type="GO" id="GO:0019841">
    <property type="term" value="F:retinol binding"/>
    <property type="evidence" value="ECO:0007669"/>
    <property type="project" value="UniProtKB-KW"/>
</dbReference>
<dbReference type="GO" id="GO:0034632">
    <property type="term" value="F:retinol transmembrane transporter activity"/>
    <property type="evidence" value="ECO:0007669"/>
    <property type="project" value="InterPro"/>
</dbReference>
<dbReference type="CDD" id="cd00743">
    <property type="entry name" value="lipocalin_RBP_like"/>
    <property type="match status" value="1"/>
</dbReference>
<dbReference type="Gene3D" id="2.40.128.20">
    <property type="match status" value="1"/>
</dbReference>
<dbReference type="InterPro" id="IPR012674">
    <property type="entry name" value="Calycin"/>
</dbReference>
<dbReference type="InterPro" id="IPR022271">
    <property type="entry name" value="Lipocalin_ApoD"/>
</dbReference>
<dbReference type="InterPro" id="IPR022272">
    <property type="entry name" value="Lipocalin_CS"/>
</dbReference>
<dbReference type="InterPro" id="IPR000566">
    <property type="entry name" value="Lipocln_cytosolic_FA-bd_dom"/>
</dbReference>
<dbReference type="InterPro" id="IPR002449">
    <property type="entry name" value="Retinol-bd/Purpurin"/>
</dbReference>
<dbReference type="PANTHER" id="PTHR11873:SF1">
    <property type="entry name" value="PURPURIN"/>
    <property type="match status" value="1"/>
</dbReference>
<dbReference type="PANTHER" id="PTHR11873">
    <property type="entry name" value="RETINOL-BINDING PROTEIN 4"/>
    <property type="match status" value="1"/>
</dbReference>
<dbReference type="Pfam" id="PF00061">
    <property type="entry name" value="Lipocalin"/>
    <property type="match status" value="1"/>
</dbReference>
<dbReference type="PIRSF" id="PIRSF036893">
    <property type="entry name" value="Lipocalin_ApoD"/>
    <property type="match status" value="1"/>
</dbReference>
<dbReference type="PIRSF" id="PIRSF500204">
    <property type="entry name" value="RBP_purpurin"/>
    <property type="match status" value="1"/>
</dbReference>
<dbReference type="PRINTS" id="PR00179">
    <property type="entry name" value="LIPOCALIN"/>
</dbReference>
<dbReference type="PRINTS" id="PR01174">
    <property type="entry name" value="RETINOLBNDNG"/>
</dbReference>
<dbReference type="SUPFAM" id="SSF50814">
    <property type="entry name" value="Lipocalins"/>
    <property type="match status" value="1"/>
</dbReference>
<dbReference type="PROSITE" id="PS00213">
    <property type="entry name" value="LIPOCALIN"/>
    <property type="match status" value="1"/>
</dbReference>